<evidence type="ECO:0000255" key="1">
    <source>
        <dbReference type="HAMAP-Rule" id="MF_01379"/>
    </source>
</evidence>
<evidence type="ECO:0000305" key="2"/>
<feature type="initiator methionine" description="Removed" evidence="1">
    <location>
        <position position="1"/>
    </location>
</feature>
<feature type="chain" id="PRO_0000340044" description="Photosystem II protein D1" evidence="1">
    <location>
        <begin position="2"/>
        <end position="344"/>
    </location>
</feature>
<feature type="propeptide" id="PRO_0000340045" evidence="1">
    <location>
        <begin position="345"/>
        <end position="353"/>
    </location>
</feature>
<feature type="transmembrane region" description="Helical" evidence="1">
    <location>
        <begin position="29"/>
        <end position="46"/>
    </location>
</feature>
<feature type="transmembrane region" description="Helical" evidence="1">
    <location>
        <begin position="118"/>
        <end position="133"/>
    </location>
</feature>
<feature type="transmembrane region" description="Helical" evidence="1">
    <location>
        <begin position="142"/>
        <end position="156"/>
    </location>
</feature>
<feature type="transmembrane region" description="Helical" evidence="1">
    <location>
        <begin position="197"/>
        <end position="218"/>
    </location>
</feature>
<feature type="transmembrane region" description="Helical" evidence="1">
    <location>
        <begin position="274"/>
        <end position="288"/>
    </location>
</feature>
<feature type="binding site" description="axial binding residue" evidence="1">
    <location>
        <position position="118"/>
    </location>
    <ligand>
        <name>chlorophyll a</name>
        <dbReference type="ChEBI" id="CHEBI:58416"/>
        <label>ChlzD1</label>
    </ligand>
    <ligandPart>
        <name>Mg</name>
        <dbReference type="ChEBI" id="CHEBI:25107"/>
    </ligandPart>
</feature>
<feature type="binding site" evidence="1">
    <location>
        <position position="126"/>
    </location>
    <ligand>
        <name>pheophytin a</name>
        <dbReference type="ChEBI" id="CHEBI:136840"/>
        <label>D1</label>
    </ligand>
</feature>
<feature type="binding site" evidence="1">
    <location>
        <position position="170"/>
    </location>
    <ligand>
        <name>[CaMn4O5] cluster</name>
        <dbReference type="ChEBI" id="CHEBI:189552"/>
    </ligand>
</feature>
<feature type="binding site" evidence="1">
    <location>
        <position position="189"/>
    </location>
    <ligand>
        <name>[CaMn4O5] cluster</name>
        <dbReference type="ChEBI" id="CHEBI:189552"/>
    </ligand>
</feature>
<feature type="binding site" description="axial binding residue" evidence="1">
    <location>
        <position position="198"/>
    </location>
    <ligand>
        <name>chlorophyll a</name>
        <dbReference type="ChEBI" id="CHEBI:58416"/>
        <label>PD1</label>
    </ligand>
    <ligandPart>
        <name>Mg</name>
        <dbReference type="ChEBI" id="CHEBI:25107"/>
    </ligandPart>
</feature>
<feature type="binding site" evidence="1">
    <location>
        <position position="215"/>
    </location>
    <ligand>
        <name>a quinone</name>
        <dbReference type="ChEBI" id="CHEBI:132124"/>
        <label>B</label>
    </ligand>
</feature>
<feature type="binding site" evidence="1">
    <location>
        <position position="215"/>
    </location>
    <ligand>
        <name>Fe cation</name>
        <dbReference type="ChEBI" id="CHEBI:24875"/>
        <note>ligand shared with heterodimeric partner</note>
    </ligand>
</feature>
<feature type="binding site" evidence="1">
    <location>
        <begin position="264"/>
        <end position="265"/>
    </location>
    <ligand>
        <name>a quinone</name>
        <dbReference type="ChEBI" id="CHEBI:132124"/>
        <label>B</label>
    </ligand>
</feature>
<feature type="binding site" evidence="1">
    <location>
        <position position="272"/>
    </location>
    <ligand>
        <name>Fe cation</name>
        <dbReference type="ChEBI" id="CHEBI:24875"/>
        <note>ligand shared with heterodimeric partner</note>
    </ligand>
</feature>
<feature type="binding site" evidence="1">
    <location>
        <position position="332"/>
    </location>
    <ligand>
        <name>[CaMn4O5] cluster</name>
        <dbReference type="ChEBI" id="CHEBI:189552"/>
    </ligand>
</feature>
<feature type="binding site" evidence="1">
    <location>
        <position position="333"/>
    </location>
    <ligand>
        <name>[CaMn4O5] cluster</name>
        <dbReference type="ChEBI" id="CHEBI:189552"/>
    </ligand>
</feature>
<feature type="binding site" evidence="1">
    <location>
        <position position="342"/>
    </location>
    <ligand>
        <name>[CaMn4O5] cluster</name>
        <dbReference type="ChEBI" id="CHEBI:189552"/>
    </ligand>
</feature>
<feature type="binding site" evidence="1">
    <location>
        <position position="344"/>
    </location>
    <ligand>
        <name>[CaMn4O5] cluster</name>
        <dbReference type="ChEBI" id="CHEBI:189552"/>
    </ligand>
</feature>
<feature type="site" description="Tyrosine radical intermediate" evidence="1">
    <location>
        <position position="161"/>
    </location>
</feature>
<feature type="site" description="Stabilizes free radical intermediate" evidence="1">
    <location>
        <position position="190"/>
    </location>
</feature>
<feature type="site" description="Cleavage; by CTPA" evidence="1">
    <location>
        <begin position="344"/>
        <end position="345"/>
    </location>
</feature>
<feature type="modified residue" description="N-acetylthreonine" evidence="1">
    <location>
        <position position="2"/>
    </location>
</feature>
<feature type="modified residue" description="Phosphothreonine" evidence="1">
    <location>
        <position position="2"/>
    </location>
</feature>
<dbReference type="EC" id="1.10.3.9" evidence="1"/>
<dbReference type="EMBL" id="CR954199">
    <property type="protein sequence ID" value="CAL36355.1"/>
    <property type="molecule type" value="Genomic_DNA"/>
</dbReference>
<dbReference type="EMBL" id="CR954199">
    <property type="protein sequence ID" value="CAL36386.1"/>
    <property type="molecule type" value="Genomic_DNA"/>
</dbReference>
<dbReference type="SMR" id="Q0P3J1"/>
<dbReference type="FunCoup" id="Q0P3J1">
    <property type="interactions" value="133"/>
</dbReference>
<dbReference type="STRING" id="70448.Q0P3J1"/>
<dbReference type="KEGG" id="ota:OstapCp30"/>
<dbReference type="KEGG" id="ota:OstapCp61"/>
<dbReference type="eggNOG" id="ENOG502QR09">
    <property type="taxonomic scope" value="Eukaryota"/>
</dbReference>
<dbReference type="InParanoid" id="Q0P3J1"/>
<dbReference type="Proteomes" id="UP000009170">
    <property type="component" value="Chloroplast"/>
</dbReference>
<dbReference type="GO" id="GO:0009535">
    <property type="term" value="C:chloroplast thylakoid membrane"/>
    <property type="evidence" value="ECO:0007669"/>
    <property type="project" value="UniProtKB-SubCell"/>
</dbReference>
<dbReference type="GO" id="GO:0009523">
    <property type="term" value="C:photosystem II"/>
    <property type="evidence" value="ECO:0007669"/>
    <property type="project" value="UniProtKB-KW"/>
</dbReference>
<dbReference type="GO" id="GO:0016168">
    <property type="term" value="F:chlorophyll binding"/>
    <property type="evidence" value="ECO:0007669"/>
    <property type="project" value="UniProtKB-UniRule"/>
</dbReference>
<dbReference type="GO" id="GO:0045156">
    <property type="term" value="F:electron transporter, transferring electrons within the cyclic electron transport pathway of photosynthesis activity"/>
    <property type="evidence" value="ECO:0007669"/>
    <property type="project" value="InterPro"/>
</dbReference>
<dbReference type="GO" id="GO:0005506">
    <property type="term" value="F:iron ion binding"/>
    <property type="evidence" value="ECO:0007669"/>
    <property type="project" value="UniProtKB-UniRule"/>
</dbReference>
<dbReference type="GO" id="GO:0016682">
    <property type="term" value="F:oxidoreductase activity, acting on diphenols and related substances as donors, oxygen as acceptor"/>
    <property type="evidence" value="ECO:0007669"/>
    <property type="project" value="UniProtKB-UniRule"/>
</dbReference>
<dbReference type="GO" id="GO:0010242">
    <property type="term" value="F:oxygen evolving activity"/>
    <property type="evidence" value="ECO:0007669"/>
    <property type="project" value="UniProtKB-EC"/>
</dbReference>
<dbReference type="GO" id="GO:0009772">
    <property type="term" value="P:photosynthetic electron transport in photosystem II"/>
    <property type="evidence" value="ECO:0007669"/>
    <property type="project" value="InterPro"/>
</dbReference>
<dbReference type="GO" id="GO:0009635">
    <property type="term" value="P:response to herbicide"/>
    <property type="evidence" value="ECO:0007669"/>
    <property type="project" value="UniProtKB-KW"/>
</dbReference>
<dbReference type="CDD" id="cd09289">
    <property type="entry name" value="Photosystem-II_D1"/>
    <property type="match status" value="1"/>
</dbReference>
<dbReference type="FunFam" id="1.20.85.10:FF:000002">
    <property type="entry name" value="Photosystem II protein D1"/>
    <property type="match status" value="1"/>
</dbReference>
<dbReference type="Gene3D" id="1.20.85.10">
    <property type="entry name" value="Photosystem II protein D1-like"/>
    <property type="match status" value="1"/>
</dbReference>
<dbReference type="HAMAP" id="MF_01379">
    <property type="entry name" value="PSII_PsbA_D1"/>
    <property type="match status" value="1"/>
</dbReference>
<dbReference type="InterPro" id="IPR055266">
    <property type="entry name" value="D1/D2"/>
</dbReference>
<dbReference type="InterPro" id="IPR036854">
    <property type="entry name" value="Photo_II_D1/D2_sf"/>
</dbReference>
<dbReference type="InterPro" id="IPR000484">
    <property type="entry name" value="Photo_RC_L/M"/>
</dbReference>
<dbReference type="InterPro" id="IPR055265">
    <property type="entry name" value="Photo_RC_L/M_CS"/>
</dbReference>
<dbReference type="InterPro" id="IPR005867">
    <property type="entry name" value="PSII_D1"/>
</dbReference>
<dbReference type="NCBIfam" id="TIGR01151">
    <property type="entry name" value="psbA"/>
    <property type="match status" value="1"/>
</dbReference>
<dbReference type="PANTHER" id="PTHR33149:SF12">
    <property type="entry name" value="PHOTOSYSTEM II D2 PROTEIN"/>
    <property type="match status" value="1"/>
</dbReference>
<dbReference type="PANTHER" id="PTHR33149">
    <property type="entry name" value="PHOTOSYSTEM II PROTEIN D1"/>
    <property type="match status" value="1"/>
</dbReference>
<dbReference type="Pfam" id="PF00124">
    <property type="entry name" value="Photo_RC"/>
    <property type="match status" value="1"/>
</dbReference>
<dbReference type="PRINTS" id="PR00256">
    <property type="entry name" value="REACTNCENTRE"/>
</dbReference>
<dbReference type="SUPFAM" id="SSF81483">
    <property type="entry name" value="Bacterial photosystem II reaction centre, L and M subunits"/>
    <property type="match status" value="1"/>
</dbReference>
<dbReference type="PROSITE" id="PS00244">
    <property type="entry name" value="REACTION_CENTER"/>
    <property type="match status" value="1"/>
</dbReference>
<gene>
    <name evidence="1 2" type="primary">psbA1</name>
    <name type="ordered locus">OtCpg00300</name>
</gene>
<gene>
    <name evidence="1 2" type="primary">psbA2</name>
    <name type="ordered locus">OtCpg00610</name>
</gene>
<accession>Q0P3J1</accession>
<proteinExistence type="inferred from homology"/>
<sequence length="353" mass="38911">MTATLERRANATVWGRFCSWITSTENRLYIGWFGVLMIPTLLTATSVFIVAFIAAPPVDIDGIREPVSGSLMYGNNIISGAVIPTSNAIGLHFYPIWEAASLDEWLYNGGPYQLIVCHFFIGICSYMGREWELSFRLGMRPWIAVAYSAPVAAATAVFLIYPIGQGSFSDGMPLGISGTFNFMIVFQAEHNILMHPFHMLGVAGVFGGSLFSAMHGSLVTSSLIRETTENESANAGYKFGQEEETYNIVAAHGYFGRLIFQYASFNNSRSLHFFLAIWPVMGIWFTALGISTMAFNLNGFNFNQSVVDSNGRVINTWADIVNRANLGMEVMHERNAHNFPLDLASVEAPSINA</sequence>
<protein>
    <recommendedName>
        <fullName evidence="1">Photosystem II protein D1</fullName>
        <shortName evidence="1">PSII D1 protein</shortName>
        <ecNumber evidence="1">1.10.3.9</ecNumber>
    </recommendedName>
    <alternativeName>
        <fullName evidence="1">Photosystem II Q(B) protein</fullName>
    </alternativeName>
</protein>
<reference key="1">
    <citation type="journal article" date="2007" name="Mol. Biol. Evol.">
        <title>The complete chloroplast and mitochondrial DNA sequence of Ostreococcus tauri: organelle genomes of the smallest eukaryote are examples of compaction.</title>
        <authorList>
            <person name="Robbens S."/>
            <person name="Derelle E."/>
            <person name="Ferraz C."/>
            <person name="Wuyts J."/>
            <person name="Moreau H."/>
            <person name="Van de Peer Y."/>
        </authorList>
    </citation>
    <scope>NUCLEOTIDE SEQUENCE [LARGE SCALE GENOMIC DNA]</scope>
    <source>
        <strain>OTTH0595</strain>
    </source>
</reference>
<comment type="function">
    <text evidence="1">Photosystem II (PSII) is a light-driven water:plastoquinone oxidoreductase that uses light energy to abstract electrons from H(2)O, generating O(2) and a proton gradient subsequently used for ATP formation. It consists of a core antenna complex that captures photons, and an electron transfer chain that converts photonic excitation into a charge separation. The D1/D2 (PsbA/PsbD) reaction center heterodimer binds P680, the primary electron donor of PSII as well as several subsequent electron acceptors.</text>
</comment>
<comment type="catalytic activity">
    <reaction evidence="1">
        <text>2 a plastoquinone + 4 hnu + 2 H2O = 2 a plastoquinol + O2</text>
        <dbReference type="Rhea" id="RHEA:36359"/>
        <dbReference type="Rhea" id="RHEA-COMP:9561"/>
        <dbReference type="Rhea" id="RHEA-COMP:9562"/>
        <dbReference type="ChEBI" id="CHEBI:15377"/>
        <dbReference type="ChEBI" id="CHEBI:15379"/>
        <dbReference type="ChEBI" id="CHEBI:17757"/>
        <dbReference type="ChEBI" id="CHEBI:30212"/>
        <dbReference type="ChEBI" id="CHEBI:62192"/>
        <dbReference type="EC" id="1.10.3.9"/>
    </reaction>
</comment>
<comment type="cofactor">
    <text evidence="1">The D1/D2 heterodimer binds P680, chlorophylls that are the primary electron donor of PSII, and subsequent electron acceptors. It shares a non-heme iron and each subunit binds pheophytin, quinone, additional chlorophylls, carotenoids and lipids. D1 provides most of the ligands for the Mn4-Ca-O5 cluster of the oxygen-evolving complex (OEC). There is also a Cl(-1) ion associated with D1 and D2, which is required for oxygen evolution. The PSII complex binds additional chlorophylls, carotenoids and specific lipids.</text>
</comment>
<comment type="subunit">
    <text evidence="1">PSII is composed of 1 copy each of membrane proteins PsbA, PsbB, PsbC, PsbD, PsbE, PsbF, PsbH, PsbI, PsbJ, PsbK, PsbL, PsbM, PsbT, PsbX, PsbY, PsbZ, Psb30/Ycf12, at least 3 peripheral proteins of the oxygen-evolving complex and a large number of cofactors. It forms dimeric complexes.</text>
</comment>
<comment type="subcellular location">
    <subcellularLocation>
        <location evidence="1">Plastid</location>
        <location evidence="1">Chloroplast thylakoid membrane</location>
        <topology evidence="1">Multi-pass membrane protein</topology>
    </subcellularLocation>
</comment>
<comment type="PTM">
    <text evidence="1">Tyr-161 forms a radical intermediate that is referred to as redox-active TyrZ, YZ or Y-Z.</text>
</comment>
<comment type="PTM">
    <text evidence="1">C-terminally processed by CTPA; processing is essential to allow assembly of the oxygen-evolving complex and thus photosynthetic growth.</text>
</comment>
<comment type="miscellaneous">
    <text evidence="1">2 of the reaction center chlorophylls (ChlD1 and ChlD2) are entirely coordinated by water.</text>
</comment>
<comment type="miscellaneous">
    <text evidence="1">Herbicides such as atrazine, BNT, diuron or ioxynil bind in the Q(B) binding site and block subsequent electron transfer.</text>
</comment>
<comment type="similarity">
    <text evidence="1">Belongs to the reaction center PufL/M/PsbA/D family.</text>
</comment>
<geneLocation type="chloroplast"/>
<name>PSBA_OSTTA</name>
<organism>
    <name type="scientific">Ostreococcus tauri</name>
    <dbReference type="NCBI Taxonomy" id="70448"/>
    <lineage>
        <taxon>Eukaryota</taxon>
        <taxon>Viridiplantae</taxon>
        <taxon>Chlorophyta</taxon>
        <taxon>Mamiellophyceae</taxon>
        <taxon>Mamiellales</taxon>
        <taxon>Bathycoccaceae</taxon>
        <taxon>Ostreococcus</taxon>
    </lineage>
</organism>
<keyword id="KW-0007">Acetylation</keyword>
<keyword id="KW-0106">Calcium</keyword>
<keyword id="KW-0148">Chlorophyll</keyword>
<keyword id="KW-0150">Chloroplast</keyword>
<keyword id="KW-0157">Chromophore</keyword>
<keyword id="KW-0249">Electron transport</keyword>
<keyword id="KW-0359">Herbicide resistance</keyword>
<keyword id="KW-0408">Iron</keyword>
<keyword id="KW-0460">Magnesium</keyword>
<keyword id="KW-0464">Manganese</keyword>
<keyword id="KW-0472">Membrane</keyword>
<keyword id="KW-0479">Metal-binding</keyword>
<keyword id="KW-0560">Oxidoreductase</keyword>
<keyword id="KW-0597">Phosphoprotein</keyword>
<keyword id="KW-0602">Photosynthesis</keyword>
<keyword id="KW-0604">Photosystem II</keyword>
<keyword id="KW-0934">Plastid</keyword>
<keyword id="KW-1185">Reference proteome</keyword>
<keyword id="KW-0793">Thylakoid</keyword>
<keyword id="KW-0812">Transmembrane</keyword>
<keyword id="KW-1133">Transmembrane helix</keyword>
<keyword id="KW-0813">Transport</keyword>